<keyword id="KW-0066">ATP synthesis</keyword>
<keyword id="KW-0067">ATP-binding</keyword>
<keyword id="KW-0139">CF(1)</keyword>
<keyword id="KW-0150">Chloroplast</keyword>
<keyword id="KW-0375">Hydrogen ion transport</keyword>
<keyword id="KW-0406">Ion transport</keyword>
<keyword id="KW-0472">Membrane</keyword>
<keyword id="KW-0547">Nucleotide-binding</keyword>
<keyword id="KW-0934">Plastid</keyword>
<keyword id="KW-0793">Thylakoid</keyword>
<keyword id="KW-1278">Translocase</keyword>
<keyword id="KW-0813">Transport</keyword>
<proteinExistence type="inferred from homology"/>
<protein>
    <recommendedName>
        <fullName evidence="1">ATP synthase subunit alpha, chloroplastic</fullName>
        <ecNumber evidence="1">7.1.2.2</ecNumber>
    </recommendedName>
    <alternativeName>
        <fullName evidence="1">ATP synthase F1 sector subunit alpha</fullName>
    </alternativeName>
    <alternativeName>
        <fullName evidence="1">F-ATPase subunit alpha</fullName>
    </alternativeName>
</protein>
<sequence>MVTMRADEISNIIRERIEQYNREVKVVNTGTVLQVGDGIARIHGLDEVMAGELVEFEEGTIGIALNLESNNVGVVLMGDGLMIQEGSSVKATGRIAQIPVSEAYLGRVINALAKPIDGRGEISAYESRLIESPAPGIISRRSVYEPLQTGLIAIDSMIPIGRGQRELIIGDRQTGKTAVATDTILNQKGQNVICVYVAIGQKASSVAQVVTTFQERGAMEYTIVVAEMADSPATLQYLAPYTGAALAEYFMYRERHTSIIYDDPSKQAQAYRQMSLLLRRPPGREAYPGDVFYLHSRLLERAAKLSSRLGEGSMTALPIVETQSGDVSAYIPTNVISITDGQIFLSADLFNAGIRPAINVGISVSRVGSAAQIKAMKQVAGKSKLELAQFAELEAFAQFASDLDKATQNQLARGQRLRELLKQSQSAPLTVEEQIVTIYTGANGYLDSLEIGQVKKFLVQLRTYLKTNKPQFQEIISSTRTFTEQAEALLKEIIQEQIELFLLQEQT</sequence>
<gene>
    <name evidence="1" type="primary">atpA</name>
</gene>
<evidence type="ECO:0000255" key="1">
    <source>
        <dbReference type="HAMAP-Rule" id="MF_01346"/>
    </source>
</evidence>
<name>ATPA_CHLSC</name>
<reference key="1">
    <citation type="journal article" date="2007" name="Mol. Phylogenet. Evol.">
        <title>Phylogenetic and evolutionary implications of complete chloroplast genome sequences of four early-diverging angiosperms: Buxus (Buxaceae), Chloranthus (Chloranthaceae), Dioscorea (Dioscoreaceae), and Illicium (Schisandraceae).</title>
        <authorList>
            <person name="Hansen D.R."/>
            <person name="Dastidar S.G."/>
            <person name="Cai Z."/>
            <person name="Penaflor C."/>
            <person name="Kuehl J.V."/>
            <person name="Boore J.L."/>
            <person name="Jansen R.K."/>
        </authorList>
    </citation>
    <scope>NUCLEOTIDE SEQUENCE [LARGE SCALE GENOMIC DNA]</scope>
</reference>
<organism>
    <name type="scientific">Chloranthus spicatus</name>
    <name type="common">Chulantree</name>
    <name type="synonym">Nigrina spicata</name>
    <dbReference type="NCBI Taxonomy" id="13006"/>
    <lineage>
        <taxon>Eukaryota</taxon>
        <taxon>Viridiplantae</taxon>
        <taxon>Streptophyta</taxon>
        <taxon>Embryophyta</taxon>
        <taxon>Tracheophyta</taxon>
        <taxon>Spermatophyta</taxon>
        <taxon>Magnoliopsida</taxon>
        <taxon>Chloranthales</taxon>
        <taxon>Chloranthaceae</taxon>
        <taxon>Chloranthus</taxon>
    </lineage>
</organism>
<geneLocation type="chloroplast"/>
<comment type="function">
    <text evidence="1">Produces ATP from ADP in the presence of a proton gradient across the membrane. The alpha chain is a regulatory subunit.</text>
</comment>
<comment type="catalytic activity">
    <reaction evidence="1">
        <text>ATP + H2O + 4 H(+)(in) = ADP + phosphate + 5 H(+)(out)</text>
        <dbReference type="Rhea" id="RHEA:57720"/>
        <dbReference type="ChEBI" id="CHEBI:15377"/>
        <dbReference type="ChEBI" id="CHEBI:15378"/>
        <dbReference type="ChEBI" id="CHEBI:30616"/>
        <dbReference type="ChEBI" id="CHEBI:43474"/>
        <dbReference type="ChEBI" id="CHEBI:456216"/>
        <dbReference type="EC" id="7.1.2.2"/>
    </reaction>
</comment>
<comment type="subunit">
    <text evidence="1">F-type ATPases have 2 components, CF(1) - the catalytic core - and CF(0) - the membrane proton channel. CF(1) has five subunits: alpha(3), beta(3), gamma(1), delta(1), epsilon(1). CF(0) has four main subunits: a, b, b' and c.</text>
</comment>
<comment type="subcellular location">
    <subcellularLocation>
        <location evidence="1">Plastid</location>
        <location evidence="1">Chloroplast thylakoid membrane</location>
        <topology evidence="1">Peripheral membrane protein</topology>
    </subcellularLocation>
</comment>
<comment type="similarity">
    <text evidence="1">Belongs to the ATPase alpha/beta chains family.</text>
</comment>
<dbReference type="EC" id="7.1.2.2" evidence="1"/>
<dbReference type="EMBL" id="EF380352">
    <property type="protein sequence ID" value="ABQ43245.1"/>
    <property type="molecule type" value="Genomic_DNA"/>
</dbReference>
<dbReference type="RefSeq" id="YP_001294083.1">
    <property type="nucleotide sequence ID" value="NC_009598.1"/>
</dbReference>
<dbReference type="SMR" id="A6MMA7"/>
<dbReference type="GeneID" id="5236532"/>
<dbReference type="GO" id="GO:0009535">
    <property type="term" value="C:chloroplast thylakoid membrane"/>
    <property type="evidence" value="ECO:0007669"/>
    <property type="project" value="UniProtKB-SubCell"/>
</dbReference>
<dbReference type="GO" id="GO:0045259">
    <property type="term" value="C:proton-transporting ATP synthase complex"/>
    <property type="evidence" value="ECO:0007669"/>
    <property type="project" value="UniProtKB-KW"/>
</dbReference>
<dbReference type="GO" id="GO:0043531">
    <property type="term" value="F:ADP binding"/>
    <property type="evidence" value="ECO:0007669"/>
    <property type="project" value="TreeGrafter"/>
</dbReference>
<dbReference type="GO" id="GO:0005524">
    <property type="term" value="F:ATP binding"/>
    <property type="evidence" value="ECO:0007669"/>
    <property type="project" value="UniProtKB-UniRule"/>
</dbReference>
<dbReference type="GO" id="GO:0046933">
    <property type="term" value="F:proton-transporting ATP synthase activity, rotational mechanism"/>
    <property type="evidence" value="ECO:0007669"/>
    <property type="project" value="UniProtKB-UniRule"/>
</dbReference>
<dbReference type="CDD" id="cd18113">
    <property type="entry name" value="ATP-synt_F1_alpha_C"/>
    <property type="match status" value="1"/>
</dbReference>
<dbReference type="CDD" id="cd18116">
    <property type="entry name" value="ATP-synt_F1_alpha_N"/>
    <property type="match status" value="1"/>
</dbReference>
<dbReference type="CDD" id="cd01132">
    <property type="entry name" value="F1-ATPase_alpha_CD"/>
    <property type="match status" value="1"/>
</dbReference>
<dbReference type="FunFam" id="1.20.150.20:FF:000001">
    <property type="entry name" value="ATP synthase subunit alpha"/>
    <property type="match status" value="1"/>
</dbReference>
<dbReference type="FunFam" id="2.40.30.20:FF:000001">
    <property type="entry name" value="ATP synthase subunit alpha"/>
    <property type="match status" value="1"/>
</dbReference>
<dbReference type="FunFam" id="3.40.50.300:FF:000002">
    <property type="entry name" value="ATP synthase subunit alpha"/>
    <property type="match status" value="1"/>
</dbReference>
<dbReference type="Gene3D" id="2.40.30.20">
    <property type="match status" value="1"/>
</dbReference>
<dbReference type="Gene3D" id="1.20.150.20">
    <property type="entry name" value="ATP synthase alpha/beta chain, C-terminal domain"/>
    <property type="match status" value="1"/>
</dbReference>
<dbReference type="Gene3D" id="3.40.50.300">
    <property type="entry name" value="P-loop containing nucleotide triphosphate hydrolases"/>
    <property type="match status" value="1"/>
</dbReference>
<dbReference type="HAMAP" id="MF_01346">
    <property type="entry name" value="ATP_synth_alpha_bact"/>
    <property type="match status" value="1"/>
</dbReference>
<dbReference type="InterPro" id="IPR023366">
    <property type="entry name" value="ATP_synth_asu-like_sf"/>
</dbReference>
<dbReference type="InterPro" id="IPR000793">
    <property type="entry name" value="ATP_synth_asu_C"/>
</dbReference>
<dbReference type="InterPro" id="IPR038376">
    <property type="entry name" value="ATP_synth_asu_C_sf"/>
</dbReference>
<dbReference type="InterPro" id="IPR033732">
    <property type="entry name" value="ATP_synth_F1_a_nt-bd_dom"/>
</dbReference>
<dbReference type="InterPro" id="IPR005294">
    <property type="entry name" value="ATP_synth_F1_asu"/>
</dbReference>
<dbReference type="InterPro" id="IPR020003">
    <property type="entry name" value="ATPase_a/bsu_AS"/>
</dbReference>
<dbReference type="InterPro" id="IPR004100">
    <property type="entry name" value="ATPase_F1/V1/A1_a/bsu_N"/>
</dbReference>
<dbReference type="InterPro" id="IPR036121">
    <property type="entry name" value="ATPase_F1/V1/A1_a/bsu_N_sf"/>
</dbReference>
<dbReference type="InterPro" id="IPR000194">
    <property type="entry name" value="ATPase_F1/V1/A1_a/bsu_nucl-bd"/>
</dbReference>
<dbReference type="InterPro" id="IPR027417">
    <property type="entry name" value="P-loop_NTPase"/>
</dbReference>
<dbReference type="NCBIfam" id="TIGR00962">
    <property type="entry name" value="atpA"/>
    <property type="match status" value="1"/>
</dbReference>
<dbReference type="NCBIfam" id="NF009884">
    <property type="entry name" value="PRK13343.1"/>
    <property type="match status" value="1"/>
</dbReference>
<dbReference type="PANTHER" id="PTHR48082">
    <property type="entry name" value="ATP SYNTHASE SUBUNIT ALPHA, MITOCHONDRIAL"/>
    <property type="match status" value="1"/>
</dbReference>
<dbReference type="PANTHER" id="PTHR48082:SF2">
    <property type="entry name" value="ATP SYNTHASE SUBUNIT ALPHA, MITOCHONDRIAL"/>
    <property type="match status" value="1"/>
</dbReference>
<dbReference type="Pfam" id="PF00006">
    <property type="entry name" value="ATP-synt_ab"/>
    <property type="match status" value="1"/>
</dbReference>
<dbReference type="Pfam" id="PF00306">
    <property type="entry name" value="ATP-synt_ab_C"/>
    <property type="match status" value="1"/>
</dbReference>
<dbReference type="Pfam" id="PF02874">
    <property type="entry name" value="ATP-synt_ab_N"/>
    <property type="match status" value="1"/>
</dbReference>
<dbReference type="PIRSF" id="PIRSF039088">
    <property type="entry name" value="F_ATPase_subunit_alpha"/>
    <property type="match status" value="1"/>
</dbReference>
<dbReference type="SUPFAM" id="SSF47917">
    <property type="entry name" value="C-terminal domain of alpha and beta subunits of F1 ATP synthase"/>
    <property type="match status" value="1"/>
</dbReference>
<dbReference type="SUPFAM" id="SSF50615">
    <property type="entry name" value="N-terminal domain of alpha and beta subunits of F1 ATP synthase"/>
    <property type="match status" value="1"/>
</dbReference>
<dbReference type="SUPFAM" id="SSF52540">
    <property type="entry name" value="P-loop containing nucleoside triphosphate hydrolases"/>
    <property type="match status" value="1"/>
</dbReference>
<dbReference type="PROSITE" id="PS00152">
    <property type="entry name" value="ATPASE_ALPHA_BETA"/>
    <property type="match status" value="1"/>
</dbReference>
<accession>A6MMA7</accession>
<feature type="chain" id="PRO_0000339077" description="ATP synthase subunit alpha, chloroplastic">
    <location>
        <begin position="1"/>
        <end position="507"/>
    </location>
</feature>
<feature type="binding site" evidence="1">
    <location>
        <begin position="170"/>
        <end position="177"/>
    </location>
    <ligand>
        <name>ATP</name>
        <dbReference type="ChEBI" id="CHEBI:30616"/>
    </ligand>
</feature>
<feature type="site" description="Required for activity" evidence="1">
    <location>
        <position position="363"/>
    </location>
</feature>